<proteinExistence type="inferred from homology"/>
<protein>
    <recommendedName>
        <fullName evidence="1">N-succinylglutamate 5-semialdehyde dehydrogenase</fullName>
        <ecNumber evidence="1">1.2.1.71</ecNumber>
    </recommendedName>
    <alternativeName>
        <fullName evidence="1">Succinylglutamic semialdehyde dehydrogenase</fullName>
        <shortName evidence="1">SGSD</shortName>
    </alternativeName>
</protein>
<evidence type="ECO:0000255" key="1">
    <source>
        <dbReference type="HAMAP-Rule" id="MF_01174"/>
    </source>
</evidence>
<name>ASTD_SHEB8</name>
<sequence>MTHYIQGQWHAGKGHDVASINPANAQTIWTGKTATAEQVNAAVDAARAAQFDWFMLGFDARLAIVEAYRSQLEANKAELAETIAQETGKPQWETATEVGAMIGKIALSAAAYNKRTGTEANDTPAGRAVIRHKPHGVVAVFGPYNFPGHLPNGHIVPALLAGNTVIFKPSELTPKVAELMVSLWDKAGLPAGVLNLVQGEVDTGKALASHPQLDGLFFTGSSRTGHFLHQQYAGHPGKILALEMGGNNPLIIKGVQDIKAAVHDILQSAYISSGQRCTCARRLYVEQGEQGNALIAMLAAAVKQIKVGPWNAQPQPFMGSMISETAAKGMVAAQTNLQNLGGVSLVELTHLEAGTGLVSPGLIDVTAIDVLPDEEYFGPLLQLVRYSDFDQAIKLANQTRYGLSAGLLADSREDYDYFLARIRAGIVNWNKQITGASGAAPFGGVGASGNHRASAFYAADYCAYPVASVEADAVSLPATLSPGLSL</sequence>
<accession>A6WST7</accession>
<organism>
    <name type="scientific">Shewanella baltica (strain OS185)</name>
    <dbReference type="NCBI Taxonomy" id="402882"/>
    <lineage>
        <taxon>Bacteria</taxon>
        <taxon>Pseudomonadati</taxon>
        <taxon>Pseudomonadota</taxon>
        <taxon>Gammaproteobacteria</taxon>
        <taxon>Alteromonadales</taxon>
        <taxon>Shewanellaceae</taxon>
        <taxon>Shewanella</taxon>
    </lineage>
</organism>
<dbReference type="EC" id="1.2.1.71" evidence="1"/>
<dbReference type="EMBL" id="CP000753">
    <property type="protein sequence ID" value="ABS09876.1"/>
    <property type="molecule type" value="Genomic_DNA"/>
</dbReference>
<dbReference type="RefSeq" id="WP_012090249.1">
    <property type="nucleotide sequence ID" value="NC_009665.1"/>
</dbReference>
<dbReference type="SMR" id="A6WST7"/>
<dbReference type="KEGG" id="sbm:Shew185_3752"/>
<dbReference type="HOGENOM" id="CLU_005391_1_0_6"/>
<dbReference type="UniPathway" id="UPA00185">
    <property type="reaction ID" value="UER00282"/>
</dbReference>
<dbReference type="GO" id="GO:0043824">
    <property type="term" value="F:succinylglutamate-semialdehyde dehydrogenase activity"/>
    <property type="evidence" value="ECO:0007669"/>
    <property type="project" value="UniProtKB-EC"/>
</dbReference>
<dbReference type="GO" id="GO:0019544">
    <property type="term" value="P:arginine catabolic process to glutamate"/>
    <property type="evidence" value="ECO:0007669"/>
    <property type="project" value="UniProtKB-UniRule"/>
</dbReference>
<dbReference type="GO" id="GO:0019545">
    <property type="term" value="P:arginine catabolic process to succinate"/>
    <property type="evidence" value="ECO:0007669"/>
    <property type="project" value="UniProtKB-UniRule"/>
</dbReference>
<dbReference type="CDD" id="cd07095">
    <property type="entry name" value="ALDH_SGSD_AstD"/>
    <property type="match status" value="1"/>
</dbReference>
<dbReference type="FunFam" id="3.40.309.10:FF:000013">
    <property type="entry name" value="N-succinylglutamate 5-semialdehyde dehydrogenase"/>
    <property type="match status" value="1"/>
</dbReference>
<dbReference type="FunFam" id="3.40.605.10:FF:000010">
    <property type="entry name" value="N-succinylglutamate 5-semialdehyde dehydrogenase"/>
    <property type="match status" value="1"/>
</dbReference>
<dbReference type="Gene3D" id="3.40.605.10">
    <property type="entry name" value="Aldehyde Dehydrogenase, Chain A, domain 1"/>
    <property type="match status" value="1"/>
</dbReference>
<dbReference type="Gene3D" id="3.40.309.10">
    <property type="entry name" value="Aldehyde Dehydrogenase, Chain A, domain 2"/>
    <property type="match status" value="1"/>
</dbReference>
<dbReference type="HAMAP" id="MF_01174">
    <property type="entry name" value="Aldedh_AstD"/>
    <property type="match status" value="1"/>
</dbReference>
<dbReference type="InterPro" id="IPR016161">
    <property type="entry name" value="Ald_DH/histidinol_DH"/>
</dbReference>
<dbReference type="InterPro" id="IPR016163">
    <property type="entry name" value="Ald_DH_C"/>
</dbReference>
<dbReference type="InterPro" id="IPR016160">
    <property type="entry name" value="Ald_DH_CS_CYS"/>
</dbReference>
<dbReference type="InterPro" id="IPR029510">
    <property type="entry name" value="Ald_DH_CS_GLU"/>
</dbReference>
<dbReference type="InterPro" id="IPR016162">
    <property type="entry name" value="Ald_DH_N"/>
</dbReference>
<dbReference type="InterPro" id="IPR015590">
    <property type="entry name" value="Aldehyde_DH_dom"/>
</dbReference>
<dbReference type="InterPro" id="IPR017649">
    <property type="entry name" value="SuccinylGlu_semiald_DH_AstD"/>
</dbReference>
<dbReference type="NCBIfam" id="TIGR03240">
    <property type="entry name" value="arg_catab_astD"/>
    <property type="match status" value="1"/>
</dbReference>
<dbReference type="NCBIfam" id="NF006992">
    <property type="entry name" value="PRK09457.1"/>
    <property type="match status" value="1"/>
</dbReference>
<dbReference type="PANTHER" id="PTHR11699">
    <property type="entry name" value="ALDEHYDE DEHYDROGENASE-RELATED"/>
    <property type="match status" value="1"/>
</dbReference>
<dbReference type="Pfam" id="PF00171">
    <property type="entry name" value="Aldedh"/>
    <property type="match status" value="1"/>
</dbReference>
<dbReference type="SUPFAM" id="SSF53720">
    <property type="entry name" value="ALDH-like"/>
    <property type="match status" value="1"/>
</dbReference>
<dbReference type="PROSITE" id="PS00070">
    <property type="entry name" value="ALDEHYDE_DEHYDR_CYS"/>
    <property type="match status" value="1"/>
</dbReference>
<dbReference type="PROSITE" id="PS00687">
    <property type="entry name" value="ALDEHYDE_DEHYDR_GLU"/>
    <property type="match status" value="1"/>
</dbReference>
<gene>
    <name evidence="1" type="primary">astD</name>
    <name type="ordered locus">Shew185_3752</name>
</gene>
<feature type="chain" id="PRO_1000065765" description="N-succinylglutamate 5-semialdehyde dehydrogenase">
    <location>
        <begin position="1"/>
        <end position="486"/>
    </location>
</feature>
<feature type="active site" evidence="1">
    <location>
        <position position="243"/>
    </location>
</feature>
<feature type="active site" evidence="1">
    <location>
        <position position="277"/>
    </location>
</feature>
<feature type="binding site" evidence="1">
    <location>
        <begin position="220"/>
        <end position="225"/>
    </location>
    <ligand>
        <name>NAD(+)</name>
        <dbReference type="ChEBI" id="CHEBI:57540"/>
    </ligand>
</feature>
<reference key="1">
    <citation type="submission" date="2007-07" db="EMBL/GenBank/DDBJ databases">
        <title>Complete sequence of chromosome of Shewanella baltica OS185.</title>
        <authorList>
            <consortium name="US DOE Joint Genome Institute"/>
            <person name="Copeland A."/>
            <person name="Lucas S."/>
            <person name="Lapidus A."/>
            <person name="Barry K."/>
            <person name="Glavina del Rio T."/>
            <person name="Dalin E."/>
            <person name="Tice H."/>
            <person name="Pitluck S."/>
            <person name="Sims D."/>
            <person name="Brettin T."/>
            <person name="Bruce D."/>
            <person name="Detter J.C."/>
            <person name="Han C."/>
            <person name="Schmutz J."/>
            <person name="Larimer F."/>
            <person name="Land M."/>
            <person name="Hauser L."/>
            <person name="Kyrpides N."/>
            <person name="Mikhailova N."/>
            <person name="Brettar I."/>
            <person name="Rodrigues J."/>
            <person name="Konstantinidis K."/>
            <person name="Tiedje J."/>
            <person name="Richardson P."/>
        </authorList>
    </citation>
    <scope>NUCLEOTIDE SEQUENCE [LARGE SCALE GENOMIC DNA]</scope>
    <source>
        <strain>OS185</strain>
    </source>
</reference>
<keyword id="KW-0056">Arginine metabolism</keyword>
<keyword id="KW-0520">NAD</keyword>
<keyword id="KW-0560">Oxidoreductase</keyword>
<comment type="function">
    <text evidence="1">Catalyzes the NAD-dependent reduction of succinylglutamate semialdehyde into succinylglutamate.</text>
</comment>
<comment type="catalytic activity">
    <reaction evidence="1">
        <text>N-succinyl-L-glutamate 5-semialdehyde + NAD(+) + H2O = N-succinyl-L-glutamate + NADH + 2 H(+)</text>
        <dbReference type="Rhea" id="RHEA:10812"/>
        <dbReference type="ChEBI" id="CHEBI:15377"/>
        <dbReference type="ChEBI" id="CHEBI:15378"/>
        <dbReference type="ChEBI" id="CHEBI:57540"/>
        <dbReference type="ChEBI" id="CHEBI:57945"/>
        <dbReference type="ChEBI" id="CHEBI:58520"/>
        <dbReference type="ChEBI" id="CHEBI:58763"/>
        <dbReference type="EC" id="1.2.1.71"/>
    </reaction>
</comment>
<comment type="pathway">
    <text evidence="1">Amino-acid degradation; L-arginine degradation via AST pathway; L-glutamate and succinate from L-arginine: step 4/5.</text>
</comment>
<comment type="similarity">
    <text evidence="1">Belongs to the aldehyde dehydrogenase family. AstD subfamily.</text>
</comment>